<proteinExistence type="inferred from homology"/>
<sequence>MENMKQVVVATKNMGKVREFAELFERFDLEVKSLHDFPHIEEVEETGETFEENAILKADSLSRQLNAIVIADDSGLIVDALNGKPGVYSARFAGEPKDDQANIDKVLQELNEVAFEKRKARFYCALAVAFPEGDKKPVIVNGTCEGFILEQRRGENGFGYDPIFYVEEYKKAMAELSSDEKNAISHRGRALRKLEEKIPEWFLGE</sequence>
<dbReference type="EC" id="3.6.1.66" evidence="1"/>
<dbReference type="EMBL" id="AE017355">
    <property type="protein sequence ID" value="AAT63711.1"/>
    <property type="molecule type" value="Genomic_DNA"/>
</dbReference>
<dbReference type="RefSeq" id="YP_038533.1">
    <property type="nucleotide sequence ID" value="NC_005957.1"/>
</dbReference>
<dbReference type="SMR" id="Q6HD43"/>
<dbReference type="KEGG" id="btk:BT9727_4217"/>
<dbReference type="PATRIC" id="fig|281309.8.peg.4495"/>
<dbReference type="HOGENOM" id="CLU_082080_0_2_9"/>
<dbReference type="Proteomes" id="UP000001301">
    <property type="component" value="Chromosome"/>
</dbReference>
<dbReference type="GO" id="GO:0005829">
    <property type="term" value="C:cytosol"/>
    <property type="evidence" value="ECO:0007669"/>
    <property type="project" value="TreeGrafter"/>
</dbReference>
<dbReference type="GO" id="GO:0035870">
    <property type="term" value="F:dITP diphosphatase activity"/>
    <property type="evidence" value="ECO:0007669"/>
    <property type="project" value="RHEA"/>
</dbReference>
<dbReference type="GO" id="GO:0036220">
    <property type="term" value="F:ITP diphosphatase activity"/>
    <property type="evidence" value="ECO:0007669"/>
    <property type="project" value="UniProtKB-EC"/>
</dbReference>
<dbReference type="GO" id="GO:0046872">
    <property type="term" value="F:metal ion binding"/>
    <property type="evidence" value="ECO:0007669"/>
    <property type="project" value="UniProtKB-KW"/>
</dbReference>
<dbReference type="GO" id="GO:0000166">
    <property type="term" value="F:nucleotide binding"/>
    <property type="evidence" value="ECO:0007669"/>
    <property type="project" value="UniProtKB-KW"/>
</dbReference>
<dbReference type="GO" id="GO:0017111">
    <property type="term" value="F:ribonucleoside triphosphate phosphatase activity"/>
    <property type="evidence" value="ECO:0007669"/>
    <property type="project" value="InterPro"/>
</dbReference>
<dbReference type="GO" id="GO:0036222">
    <property type="term" value="F:XTP diphosphatase activity"/>
    <property type="evidence" value="ECO:0007669"/>
    <property type="project" value="RHEA"/>
</dbReference>
<dbReference type="GO" id="GO:0009117">
    <property type="term" value="P:nucleotide metabolic process"/>
    <property type="evidence" value="ECO:0007669"/>
    <property type="project" value="UniProtKB-KW"/>
</dbReference>
<dbReference type="GO" id="GO:0009146">
    <property type="term" value="P:purine nucleoside triphosphate catabolic process"/>
    <property type="evidence" value="ECO:0007669"/>
    <property type="project" value="UniProtKB-UniRule"/>
</dbReference>
<dbReference type="CDD" id="cd00515">
    <property type="entry name" value="HAM1"/>
    <property type="match status" value="1"/>
</dbReference>
<dbReference type="FunFam" id="3.90.950.10:FF:000001">
    <property type="entry name" value="dITP/XTP pyrophosphatase"/>
    <property type="match status" value="1"/>
</dbReference>
<dbReference type="Gene3D" id="3.90.950.10">
    <property type="match status" value="1"/>
</dbReference>
<dbReference type="HAMAP" id="MF_01405">
    <property type="entry name" value="Non_canon_purine_NTPase"/>
    <property type="match status" value="1"/>
</dbReference>
<dbReference type="InterPro" id="IPR020922">
    <property type="entry name" value="dITP/XTP_pyrophosphatase"/>
</dbReference>
<dbReference type="InterPro" id="IPR029001">
    <property type="entry name" value="ITPase-like_fam"/>
</dbReference>
<dbReference type="InterPro" id="IPR002637">
    <property type="entry name" value="RdgB/HAM1"/>
</dbReference>
<dbReference type="NCBIfam" id="NF011397">
    <property type="entry name" value="PRK14822.1"/>
    <property type="match status" value="1"/>
</dbReference>
<dbReference type="NCBIfam" id="TIGR00042">
    <property type="entry name" value="RdgB/HAM1 family non-canonical purine NTP pyrophosphatase"/>
    <property type="match status" value="1"/>
</dbReference>
<dbReference type="PANTHER" id="PTHR11067:SF9">
    <property type="entry name" value="INOSINE TRIPHOSPHATE PYROPHOSPHATASE"/>
    <property type="match status" value="1"/>
</dbReference>
<dbReference type="PANTHER" id="PTHR11067">
    <property type="entry name" value="INOSINE TRIPHOSPHATE PYROPHOSPHATASE/HAM1 PROTEIN"/>
    <property type="match status" value="1"/>
</dbReference>
<dbReference type="Pfam" id="PF01725">
    <property type="entry name" value="Ham1p_like"/>
    <property type="match status" value="1"/>
</dbReference>
<dbReference type="SUPFAM" id="SSF52972">
    <property type="entry name" value="ITPase-like"/>
    <property type="match status" value="1"/>
</dbReference>
<gene>
    <name type="ordered locus">BT9727_4217</name>
</gene>
<evidence type="ECO:0000255" key="1">
    <source>
        <dbReference type="HAMAP-Rule" id="MF_01405"/>
    </source>
</evidence>
<comment type="function">
    <text evidence="1">Pyrophosphatase that catalyzes the hydrolysis of nucleoside triphosphates to their monophosphate derivatives, with a high preference for the non-canonical purine nucleotides XTP (xanthosine triphosphate), dITP (deoxyinosine triphosphate) and ITP. Seems to function as a house-cleaning enzyme that removes non-canonical purine nucleotides from the nucleotide pool, thus preventing their incorporation into DNA/RNA and avoiding chromosomal lesions.</text>
</comment>
<comment type="catalytic activity">
    <reaction evidence="1">
        <text>XTP + H2O = XMP + diphosphate + H(+)</text>
        <dbReference type="Rhea" id="RHEA:28610"/>
        <dbReference type="ChEBI" id="CHEBI:15377"/>
        <dbReference type="ChEBI" id="CHEBI:15378"/>
        <dbReference type="ChEBI" id="CHEBI:33019"/>
        <dbReference type="ChEBI" id="CHEBI:57464"/>
        <dbReference type="ChEBI" id="CHEBI:61314"/>
        <dbReference type="EC" id="3.6.1.66"/>
    </reaction>
</comment>
<comment type="catalytic activity">
    <reaction evidence="1">
        <text>dITP + H2O = dIMP + diphosphate + H(+)</text>
        <dbReference type="Rhea" id="RHEA:28342"/>
        <dbReference type="ChEBI" id="CHEBI:15377"/>
        <dbReference type="ChEBI" id="CHEBI:15378"/>
        <dbReference type="ChEBI" id="CHEBI:33019"/>
        <dbReference type="ChEBI" id="CHEBI:61194"/>
        <dbReference type="ChEBI" id="CHEBI:61382"/>
        <dbReference type="EC" id="3.6.1.66"/>
    </reaction>
</comment>
<comment type="catalytic activity">
    <reaction evidence="1">
        <text>ITP + H2O = IMP + diphosphate + H(+)</text>
        <dbReference type="Rhea" id="RHEA:29399"/>
        <dbReference type="ChEBI" id="CHEBI:15377"/>
        <dbReference type="ChEBI" id="CHEBI:15378"/>
        <dbReference type="ChEBI" id="CHEBI:33019"/>
        <dbReference type="ChEBI" id="CHEBI:58053"/>
        <dbReference type="ChEBI" id="CHEBI:61402"/>
        <dbReference type="EC" id="3.6.1.66"/>
    </reaction>
</comment>
<comment type="cofactor">
    <cofactor evidence="1">
        <name>Mg(2+)</name>
        <dbReference type="ChEBI" id="CHEBI:18420"/>
    </cofactor>
    <text evidence="1">Binds 1 Mg(2+) ion per subunit.</text>
</comment>
<comment type="subunit">
    <text evidence="1">Homodimer.</text>
</comment>
<comment type="similarity">
    <text evidence="1">Belongs to the HAM1 NTPase family.</text>
</comment>
<keyword id="KW-0378">Hydrolase</keyword>
<keyword id="KW-0460">Magnesium</keyword>
<keyword id="KW-0479">Metal-binding</keyword>
<keyword id="KW-0546">Nucleotide metabolism</keyword>
<keyword id="KW-0547">Nucleotide-binding</keyword>
<name>IXTPA_BACHK</name>
<organism>
    <name type="scientific">Bacillus thuringiensis subsp. konkukian (strain 97-27)</name>
    <dbReference type="NCBI Taxonomy" id="281309"/>
    <lineage>
        <taxon>Bacteria</taxon>
        <taxon>Bacillati</taxon>
        <taxon>Bacillota</taxon>
        <taxon>Bacilli</taxon>
        <taxon>Bacillales</taxon>
        <taxon>Bacillaceae</taxon>
        <taxon>Bacillus</taxon>
        <taxon>Bacillus cereus group</taxon>
    </lineage>
</organism>
<accession>Q6HD43</accession>
<protein>
    <recommendedName>
        <fullName evidence="1">dITP/XTP pyrophosphatase</fullName>
        <ecNumber evidence="1">3.6.1.66</ecNumber>
    </recommendedName>
    <alternativeName>
        <fullName evidence="1">Non-canonical purine NTP pyrophosphatase</fullName>
    </alternativeName>
    <alternativeName>
        <fullName evidence="1">Non-standard purine NTP pyrophosphatase</fullName>
    </alternativeName>
    <alternativeName>
        <fullName evidence="1">Nucleoside-triphosphate diphosphatase</fullName>
    </alternativeName>
    <alternativeName>
        <fullName evidence="1">Nucleoside-triphosphate pyrophosphatase</fullName>
        <shortName evidence="1">NTPase</shortName>
    </alternativeName>
</protein>
<reference key="1">
    <citation type="journal article" date="2006" name="J. Bacteriol.">
        <title>Pathogenomic sequence analysis of Bacillus cereus and Bacillus thuringiensis isolates closely related to Bacillus anthracis.</title>
        <authorList>
            <person name="Han C.S."/>
            <person name="Xie G."/>
            <person name="Challacombe J.F."/>
            <person name="Altherr M.R."/>
            <person name="Bhotika S.S."/>
            <person name="Bruce D."/>
            <person name="Campbell C.S."/>
            <person name="Campbell M.L."/>
            <person name="Chen J."/>
            <person name="Chertkov O."/>
            <person name="Cleland C."/>
            <person name="Dimitrijevic M."/>
            <person name="Doggett N.A."/>
            <person name="Fawcett J.J."/>
            <person name="Glavina T."/>
            <person name="Goodwin L.A."/>
            <person name="Hill K.K."/>
            <person name="Hitchcock P."/>
            <person name="Jackson P.J."/>
            <person name="Keim P."/>
            <person name="Kewalramani A.R."/>
            <person name="Longmire J."/>
            <person name="Lucas S."/>
            <person name="Malfatti S."/>
            <person name="McMurry K."/>
            <person name="Meincke L.J."/>
            <person name="Misra M."/>
            <person name="Moseman B.L."/>
            <person name="Mundt M."/>
            <person name="Munk A.C."/>
            <person name="Okinaka R.T."/>
            <person name="Parson-Quintana B."/>
            <person name="Reilly L.P."/>
            <person name="Richardson P."/>
            <person name="Robinson D.L."/>
            <person name="Rubin E."/>
            <person name="Saunders E."/>
            <person name="Tapia R."/>
            <person name="Tesmer J.G."/>
            <person name="Thayer N."/>
            <person name="Thompson L.S."/>
            <person name="Tice H."/>
            <person name="Ticknor L.O."/>
            <person name="Wills P.L."/>
            <person name="Brettin T.S."/>
            <person name="Gilna P."/>
        </authorList>
    </citation>
    <scope>NUCLEOTIDE SEQUENCE [LARGE SCALE GENOMIC DNA]</scope>
    <source>
        <strain>97-27</strain>
    </source>
</reference>
<feature type="chain" id="PRO_0000178126" description="dITP/XTP pyrophosphatase">
    <location>
        <begin position="1"/>
        <end position="205"/>
    </location>
</feature>
<feature type="active site" description="Proton acceptor" evidence="1">
    <location>
        <position position="73"/>
    </location>
</feature>
<feature type="binding site" evidence="1">
    <location>
        <begin position="11"/>
        <end position="16"/>
    </location>
    <ligand>
        <name>substrate</name>
    </ligand>
</feature>
<feature type="binding site" evidence="1">
    <location>
        <position position="44"/>
    </location>
    <ligand>
        <name>Mg(2+)</name>
        <dbReference type="ChEBI" id="CHEBI:18420"/>
    </ligand>
</feature>
<feature type="binding site" evidence="1">
    <location>
        <position position="73"/>
    </location>
    <ligand>
        <name>Mg(2+)</name>
        <dbReference type="ChEBI" id="CHEBI:18420"/>
    </ligand>
</feature>
<feature type="binding site" evidence="1">
    <location>
        <position position="74"/>
    </location>
    <ligand>
        <name>substrate</name>
    </ligand>
</feature>
<feature type="binding site" evidence="1">
    <location>
        <begin position="158"/>
        <end position="161"/>
    </location>
    <ligand>
        <name>substrate</name>
    </ligand>
</feature>
<feature type="binding site" evidence="1">
    <location>
        <position position="181"/>
    </location>
    <ligand>
        <name>substrate</name>
    </ligand>
</feature>
<feature type="binding site" evidence="1">
    <location>
        <begin position="186"/>
        <end position="187"/>
    </location>
    <ligand>
        <name>substrate</name>
    </ligand>
</feature>